<organism>
    <name type="scientific">Brasenia schreberi</name>
    <name type="common">Water shield</name>
    <dbReference type="NCBI Taxonomy" id="4424"/>
    <lineage>
        <taxon>Eukaryota</taxon>
        <taxon>Viridiplantae</taxon>
        <taxon>Streptophyta</taxon>
        <taxon>Embryophyta</taxon>
        <taxon>Tracheophyta</taxon>
        <taxon>Spermatophyta</taxon>
        <taxon>Magnoliopsida</taxon>
        <taxon>Nymphaeales</taxon>
        <taxon>Cabombaceae</taxon>
        <taxon>Brasenia</taxon>
    </lineage>
</organism>
<sequence length="500" mass="59195">MDKLQYELQGYLQIDRYRKQRFLYPLLFREYIYALAHDHGLNSSIFYEPTENLGYDNKFSSLIVKRLITRLHQQNHLITSVNYSRFVGPNRSFYSQTIPEGFAGIMEISFSMRLVSSLERIAKYQNLRSIHSIFPFLEDKLSHLSYVSDILIPYPIHLEILLQTLRTRIRDAPSLHLLRCFLHEHHNCNSPITPKKCISIENQRLFLFLYNSHVYECESILVFLRKQSSHLRSISFLAFLERTHFYGKIKHLVVAPRNDSQRTLPLWFFKEPLMHYVRYQGKSIMASRCTNLLMXKWKYYLVNFWQCHFHLWSQPSRIHINELSNHSFYFLGYLSGVRLTPWVIRSQMVENSFMIDTAIKRFDTIVPIFPLIGSLVKAKFCNVSGHPTSKSVWADLSDSDIIARFGWICRNLSHYHSGSSKKHSLCRIKYILRLSCARTLARKHKSTVRAICKRLGSKLLEEFLTEEQEIVSFIFRRTRLHSERIWYLDIIRINGLVPNS</sequence>
<proteinExistence type="inferred from homology"/>
<keyword id="KW-0150">Chloroplast</keyword>
<keyword id="KW-0507">mRNA processing</keyword>
<keyword id="KW-0934">Plastid</keyword>
<keyword id="KW-0694">RNA-binding</keyword>
<keyword id="KW-0819">tRNA processing</keyword>
<feature type="chain" id="PRO_0000143288" description="Maturase K">
    <location>
        <begin position="1"/>
        <end position="500"/>
    </location>
</feature>
<comment type="function">
    <text evidence="1">Usually encoded in the trnK tRNA gene intron. Probably assists in splicing its own and other chloroplast group II introns.</text>
</comment>
<comment type="subcellular location">
    <subcellularLocation>
        <location>Plastid</location>
        <location>Chloroplast</location>
    </subcellularLocation>
</comment>
<comment type="similarity">
    <text evidence="1">Belongs to the intron maturase 2 family. MatK subfamily.</text>
</comment>
<name>MATK_BRASC</name>
<gene>
    <name evidence="1" type="primary">matK</name>
</gene>
<protein>
    <recommendedName>
        <fullName evidence="1">Maturase K</fullName>
    </recommendedName>
    <alternativeName>
        <fullName evidence="1">Intron maturase</fullName>
    </alternativeName>
</protein>
<dbReference type="EMBL" id="AF092973">
    <property type="protein sequence ID" value="AAD05553.1"/>
    <property type="molecule type" value="Genomic_DNA"/>
</dbReference>
<dbReference type="GO" id="GO:0009507">
    <property type="term" value="C:chloroplast"/>
    <property type="evidence" value="ECO:0007669"/>
    <property type="project" value="UniProtKB-SubCell"/>
</dbReference>
<dbReference type="GO" id="GO:0003723">
    <property type="term" value="F:RNA binding"/>
    <property type="evidence" value="ECO:0007669"/>
    <property type="project" value="UniProtKB-KW"/>
</dbReference>
<dbReference type="GO" id="GO:0006397">
    <property type="term" value="P:mRNA processing"/>
    <property type="evidence" value="ECO:0007669"/>
    <property type="project" value="UniProtKB-KW"/>
</dbReference>
<dbReference type="GO" id="GO:0008380">
    <property type="term" value="P:RNA splicing"/>
    <property type="evidence" value="ECO:0007669"/>
    <property type="project" value="UniProtKB-UniRule"/>
</dbReference>
<dbReference type="GO" id="GO:0008033">
    <property type="term" value="P:tRNA processing"/>
    <property type="evidence" value="ECO:0007669"/>
    <property type="project" value="UniProtKB-KW"/>
</dbReference>
<dbReference type="HAMAP" id="MF_01390">
    <property type="entry name" value="MatK"/>
    <property type="match status" value="1"/>
</dbReference>
<dbReference type="InterPro" id="IPR024937">
    <property type="entry name" value="Domain_X"/>
</dbReference>
<dbReference type="InterPro" id="IPR002866">
    <property type="entry name" value="Maturase_MatK"/>
</dbReference>
<dbReference type="InterPro" id="IPR024942">
    <property type="entry name" value="Maturase_MatK_N"/>
</dbReference>
<dbReference type="PANTHER" id="PTHR34811">
    <property type="entry name" value="MATURASE K"/>
    <property type="match status" value="1"/>
</dbReference>
<dbReference type="PANTHER" id="PTHR34811:SF1">
    <property type="entry name" value="MATURASE K"/>
    <property type="match status" value="1"/>
</dbReference>
<dbReference type="Pfam" id="PF01348">
    <property type="entry name" value="Intron_maturas2"/>
    <property type="match status" value="1"/>
</dbReference>
<dbReference type="Pfam" id="PF01824">
    <property type="entry name" value="MatK_N"/>
    <property type="match status" value="1"/>
</dbReference>
<geneLocation type="chloroplast"/>
<accession>O98634</accession>
<evidence type="ECO:0000255" key="1">
    <source>
        <dbReference type="HAMAP-Rule" id="MF_01390"/>
    </source>
</evidence>
<reference key="1">
    <citation type="journal article" date="1999" name="Syst. Bot.">
        <title>Phylogeny, classification and floral evolution of water lilies (Nymphaeaceae; Nymphaeales): a synthesis of non-molecular, rbcL, matK and 18S rDNA data.</title>
        <authorList>
            <person name="Les D.H."/>
            <person name="Schneider E.L."/>
            <person name="Padgett D.J."/>
            <person name="Soltis P.S."/>
            <person name="Soltis D.E."/>
            <person name="Zanis M."/>
        </authorList>
        <dbReference type="AGRICOLA" id="IND22004848"/>
    </citation>
    <scope>NUCLEOTIDE SEQUENCE [GENOMIC DNA]</scope>
</reference>